<sequence>MLHLSEFSGPDALLVKSTEGCCSEPSTDLTRLPARDPPAATGYPAGDFLSWALSSCGAGEYLTDSCLLEGPAPTPPPGLGYSGSFFIQAVPEHPHDPEALFNLMSGILGLTPFPGAEAAASRSPLDASFPAGSDALLPGPPDLFSPDPGAAAFPEAFWEASPSAGAPSQCLYEPHLSAPDVKPGLRAPPASPALDTASAFKGPYSPWELLSAGAPGSCGSQGGYQAAPEARFPTTGAKIEDLLSISCPAELPGGPASRLYTMGTYDAFPLAPGDLGEGAESLPGLLTPPSGEGGSSGEGGEFLDGTQPELSPLGLRSATADLPKPLVADIPGSSAVPEPPVPPPAPFPPAKARRKGRRGGKCSARCFCPRPHAKAFACPVESCVRSFARSDELNRHLRIHTGHKPFQCRICLRNFSRSDHLTTHVRTHTGEKPFACDVCGRRFARSDEKKRHSKVHLKQKARAEERLKGLGFYSLGLSFAAL</sequence>
<name>EGR4_BOVIN</name>
<dbReference type="EMBL" id="AJ293899">
    <property type="protein sequence ID" value="CAC07207.1"/>
    <property type="molecule type" value="Genomic_DNA"/>
</dbReference>
<dbReference type="EMBL" id="AJ293900">
    <property type="protein sequence ID" value="CAC07208.2"/>
    <property type="molecule type" value="mRNA"/>
</dbReference>
<dbReference type="RefSeq" id="NP_001035587.1">
    <molecule id="Q9GL32-1"/>
    <property type="nucleotide sequence ID" value="NM_001040497.1"/>
</dbReference>
<dbReference type="SMR" id="Q9GL32"/>
<dbReference type="FunCoup" id="Q9GL32">
    <property type="interactions" value="34"/>
</dbReference>
<dbReference type="STRING" id="9913.ENSBTAP00000033084"/>
<dbReference type="PaxDb" id="9913-ENSBTAP00000033084"/>
<dbReference type="GeneID" id="407155"/>
<dbReference type="KEGG" id="bta:407155"/>
<dbReference type="CTD" id="1961"/>
<dbReference type="eggNOG" id="KOG1721">
    <property type="taxonomic scope" value="Eukaryota"/>
</dbReference>
<dbReference type="InParanoid" id="Q9GL32"/>
<dbReference type="OrthoDB" id="8197458at2759"/>
<dbReference type="Proteomes" id="UP000009136">
    <property type="component" value="Unplaced"/>
</dbReference>
<dbReference type="GO" id="GO:0005634">
    <property type="term" value="C:nucleus"/>
    <property type="evidence" value="ECO:0007669"/>
    <property type="project" value="UniProtKB-SubCell"/>
</dbReference>
<dbReference type="GO" id="GO:0000981">
    <property type="term" value="F:DNA-binding transcription factor activity, RNA polymerase II-specific"/>
    <property type="evidence" value="ECO:0000318"/>
    <property type="project" value="GO_Central"/>
</dbReference>
<dbReference type="GO" id="GO:0000978">
    <property type="term" value="F:RNA polymerase II cis-regulatory region sequence-specific DNA binding"/>
    <property type="evidence" value="ECO:0000318"/>
    <property type="project" value="GO_Central"/>
</dbReference>
<dbReference type="GO" id="GO:0008270">
    <property type="term" value="F:zinc ion binding"/>
    <property type="evidence" value="ECO:0007669"/>
    <property type="project" value="UniProtKB-KW"/>
</dbReference>
<dbReference type="GO" id="GO:0006357">
    <property type="term" value="P:regulation of transcription by RNA polymerase II"/>
    <property type="evidence" value="ECO:0000318"/>
    <property type="project" value="GO_Central"/>
</dbReference>
<dbReference type="FunFam" id="3.30.160.60:FF:000324">
    <property type="entry name" value="Early growth response protein 4"/>
    <property type="match status" value="1"/>
</dbReference>
<dbReference type="FunFam" id="3.30.160.60:FF:000419">
    <property type="entry name" value="Early growth response protein 4"/>
    <property type="match status" value="1"/>
</dbReference>
<dbReference type="FunFam" id="3.30.160.60:FF:001289">
    <property type="entry name" value="Zinc finger protein 574"/>
    <property type="match status" value="1"/>
</dbReference>
<dbReference type="Gene3D" id="3.30.160.60">
    <property type="entry name" value="Classic Zinc Finger"/>
    <property type="match status" value="3"/>
</dbReference>
<dbReference type="InterPro" id="IPR036236">
    <property type="entry name" value="Znf_C2H2_sf"/>
</dbReference>
<dbReference type="InterPro" id="IPR013087">
    <property type="entry name" value="Znf_C2H2_type"/>
</dbReference>
<dbReference type="PANTHER" id="PTHR23235:SF58">
    <property type="entry name" value="EARLY GROWTH RESPONSE PROTEIN 4"/>
    <property type="match status" value="1"/>
</dbReference>
<dbReference type="PANTHER" id="PTHR23235">
    <property type="entry name" value="KRUEPPEL-LIKE TRANSCRIPTION FACTOR"/>
    <property type="match status" value="1"/>
</dbReference>
<dbReference type="Pfam" id="PF00096">
    <property type="entry name" value="zf-C2H2"/>
    <property type="match status" value="3"/>
</dbReference>
<dbReference type="SMART" id="SM00355">
    <property type="entry name" value="ZnF_C2H2"/>
    <property type="match status" value="3"/>
</dbReference>
<dbReference type="SUPFAM" id="SSF57667">
    <property type="entry name" value="beta-beta-alpha zinc fingers"/>
    <property type="match status" value="2"/>
</dbReference>
<dbReference type="PROSITE" id="PS00028">
    <property type="entry name" value="ZINC_FINGER_C2H2_1"/>
    <property type="match status" value="3"/>
</dbReference>
<dbReference type="PROSITE" id="PS50157">
    <property type="entry name" value="ZINC_FINGER_C2H2_2"/>
    <property type="match status" value="3"/>
</dbReference>
<evidence type="ECO:0000250" key="1"/>
<evidence type="ECO:0000255" key="2">
    <source>
        <dbReference type="PROSITE-ProRule" id="PRU00042"/>
    </source>
</evidence>
<evidence type="ECO:0000256" key="3">
    <source>
        <dbReference type="SAM" id="MobiDB-lite"/>
    </source>
</evidence>
<evidence type="ECO:0000269" key="4">
    <source>
    </source>
</evidence>
<evidence type="ECO:0000305" key="5"/>
<keyword id="KW-0025">Alternative splicing</keyword>
<keyword id="KW-0238">DNA-binding</keyword>
<keyword id="KW-0479">Metal-binding</keyword>
<keyword id="KW-0539">Nucleus</keyword>
<keyword id="KW-1185">Reference proteome</keyword>
<keyword id="KW-0677">Repeat</keyword>
<keyword id="KW-0804">Transcription</keyword>
<keyword id="KW-0805">Transcription regulation</keyword>
<keyword id="KW-0862">Zinc</keyword>
<keyword id="KW-0863">Zinc-finger</keyword>
<reference key="1">
    <citation type="journal article" date="2003" name="Anim. Genet.">
        <title>Cloning and genomic structure of the bovine EGR4 gene and evaluation as candidate gene for bovine spinal dysmyelination.</title>
        <authorList>
            <person name="Nissen P.H."/>
            <person name="Thomsen B."/>
            <person name="Offenberg H."/>
            <person name="Thomsen P.D."/>
            <person name="Bendixen C."/>
        </authorList>
    </citation>
    <scope>NUCLEOTIDE SEQUENCE [GENOMIC DNA]</scope>
    <scope>NUCLEOTIDE SEQUENCE [MRNA] OF 1-440</scope>
    <scope>VARIANT PHE-322</scope>
    <scope>ALTERNATIVE SPLICING</scope>
    <scope>TISSUE SPECIFICITY</scope>
</reference>
<organism>
    <name type="scientific">Bos taurus</name>
    <name type="common">Bovine</name>
    <dbReference type="NCBI Taxonomy" id="9913"/>
    <lineage>
        <taxon>Eukaryota</taxon>
        <taxon>Metazoa</taxon>
        <taxon>Chordata</taxon>
        <taxon>Craniata</taxon>
        <taxon>Vertebrata</taxon>
        <taxon>Euteleostomi</taxon>
        <taxon>Mammalia</taxon>
        <taxon>Eutheria</taxon>
        <taxon>Laurasiatheria</taxon>
        <taxon>Artiodactyla</taxon>
        <taxon>Ruminantia</taxon>
        <taxon>Pecora</taxon>
        <taxon>Bovidae</taxon>
        <taxon>Bovinae</taxon>
        <taxon>Bos</taxon>
    </lineage>
</organism>
<feature type="chain" id="PRO_0000274191" description="Early growth response protein 4">
    <location>
        <begin position="1"/>
        <end position="482"/>
    </location>
</feature>
<feature type="zinc finger region" description="C2H2-type 1" evidence="2">
    <location>
        <begin position="376"/>
        <end position="400"/>
    </location>
</feature>
<feature type="zinc finger region" description="C2H2-type 2" evidence="2">
    <location>
        <begin position="406"/>
        <end position="428"/>
    </location>
</feature>
<feature type="zinc finger region" description="C2H2-type 3" evidence="2">
    <location>
        <begin position="434"/>
        <end position="456"/>
    </location>
</feature>
<feature type="region of interest" description="Disordered" evidence="3">
    <location>
        <begin position="274"/>
        <end position="357"/>
    </location>
</feature>
<feature type="compositionally biased region" description="Low complexity" evidence="3">
    <location>
        <begin position="280"/>
        <end position="290"/>
    </location>
</feature>
<feature type="compositionally biased region" description="Gly residues" evidence="3">
    <location>
        <begin position="291"/>
        <end position="302"/>
    </location>
</feature>
<feature type="compositionally biased region" description="Pro residues" evidence="3">
    <location>
        <begin position="337"/>
        <end position="349"/>
    </location>
</feature>
<feature type="splice variant" id="VSP_022677" description="In isoform 2." evidence="5">
    <original>A</original>
    <variation>AA</variation>
    <location>
        <position position="45"/>
    </location>
</feature>
<feature type="sequence variant" evidence="4">
    <original>L</original>
    <variation>F</variation>
    <location>
        <position position="322"/>
    </location>
</feature>
<protein>
    <recommendedName>
        <fullName>Early growth response protein 4</fullName>
        <shortName>EGR-4</shortName>
    </recommendedName>
</protein>
<proteinExistence type="evidence at transcript level"/>
<gene>
    <name type="primary">EGR4</name>
</gene>
<accession>Q9GL32</accession>
<accession>Q9GL31</accession>
<comment type="function">
    <text evidence="1">Transcriptional regulator. Recognizes and binds to the DNA sequence 5'-GCGGGGGCG-3' (GSG). Activates the transcription of target genes whose products are required for mitogenesis and differentiation (By similarity).</text>
</comment>
<comment type="subcellular location">
    <subcellularLocation>
        <location evidence="5">Nucleus</location>
    </subcellularLocation>
</comment>
<comment type="alternative products">
    <event type="alternative splicing"/>
    <isoform>
        <id>Q9GL32-1</id>
        <name>1</name>
        <sequence type="displayed"/>
    </isoform>
    <isoform>
        <id>Q9GL32-2</id>
        <name>2</name>
        <sequence type="described" ref="VSP_022677"/>
    </isoform>
</comment>
<comment type="tissue specificity">
    <text evidence="4">Expressed in brain. In the cerebellum and frontal cortex.</text>
</comment>
<comment type="similarity">
    <text evidence="5">Belongs to the EGR C2H2-type zinc-finger protein family.</text>
</comment>